<feature type="chain" id="PRO_1000011547" description="4-hydroxy-3-methylbut-2-en-1-yl diphosphate synthase (flavodoxin)">
    <location>
        <begin position="1"/>
        <end position="375"/>
    </location>
</feature>
<feature type="binding site" evidence="1">
    <location>
        <position position="270"/>
    </location>
    <ligand>
        <name>[4Fe-4S] cluster</name>
        <dbReference type="ChEBI" id="CHEBI:49883"/>
    </ligand>
</feature>
<feature type="binding site" evidence="1">
    <location>
        <position position="273"/>
    </location>
    <ligand>
        <name>[4Fe-4S] cluster</name>
        <dbReference type="ChEBI" id="CHEBI:49883"/>
    </ligand>
</feature>
<feature type="binding site" evidence="1">
    <location>
        <position position="305"/>
    </location>
    <ligand>
        <name>[4Fe-4S] cluster</name>
        <dbReference type="ChEBI" id="CHEBI:49883"/>
    </ligand>
</feature>
<feature type="binding site" evidence="1">
    <location>
        <position position="312"/>
    </location>
    <ligand>
        <name>[4Fe-4S] cluster</name>
        <dbReference type="ChEBI" id="CHEBI:49883"/>
    </ligand>
</feature>
<dbReference type="EC" id="1.17.7.3" evidence="1"/>
<dbReference type="EMBL" id="CP000305">
    <property type="protein sequence ID" value="ABG17589.1"/>
    <property type="molecule type" value="Genomic_DNA"/>
</dbReference>
<dbReference type="EMBL" id="ACNQ01000008">
    <property type="protein sequence ID" value="EEO77702.1"/>
    <property type="molecule type" value="Genomic_DNA"/>
</dbReference>
<dbReference type="RefSeq" id="WP_002209817.1">
    <property type="nucleotide sequence ID" value="NZ_ACNQ01000008.1"/>
</dbReference>
<dbReference type="SMR" id="Q1CK91"/>
<dbReference type="GeneID" id="57975837"/>
<dbReference type="KEGG" id="ypn:YPN_1259"/>
<dbReference type="HOGENOM" id="CLU_042258_0_0_6"/>
<dbReference type="UniPathway" id="UPA00056">
    <property type="reaction ID" value="UER00096"/>
</dbReference>
<dbReference type="Proteomes" id="UP000008936">
    <property type="component" value="Chromosome"/>
</dbReference>
<dbReference type="GO" id="GO:0051539">
    <property type="term" value="F:4 iron, 4 sulfur cluster binding"/>
    <property type="evidence" value="ECO:0007669"/>
    <property type="project" value="UniProtKB-UniRule"/>
</dbReference>
<dbReference type="GO" id="GO:0046429">
    <property type="term" value="F:4-hydroxy-3-methylbut-2-en-1-yl diphosphate synthase activity (ferredoxin)"/>
    <property type="evidence" value="ECO:0007669"/>
    <property type="project" value="UniProtKB-UniRule"/>
</dbReference>
<dbReference type="GO" id="GO:0141197">
    <property type="term" value="F:4-hydroxy-3-methylbut-2-enyl-diphosphate synthase activity (flavodoxin)"/>
    <property type="evidence" value="ECO:0007669"/>
    <property type="project" value="UniProtKB-EC"/>
</dbReference>
<dbReference type="GO" id="GO:0005506">
    <property type="term" value="F:iron ion binding"/>
    <property type="evidence" value="ECO:0007669"/>
    <property type="project" value="InterPro"/>
</dbReference>
<dbReference type="GO" id="GO:0019288">
    <property type="term" value="P:isopentenyl diphosphate biosynthetic process, methylerythritol 4-phosphate pathway"/>
    <property type="evidence" value="ECO:0007669"/>
    <property type="project" value="UniProtKB-UniRule"/>
</dbReference>
<dbReference type="GO" id="GO:0016114">
    <property type="term" value="P:terpenoid biosynthetic process"/>
    <property type="evidence" value="ECO:0007669"/>
    <property type="project" value="InterPro"/>
</dbReference>
<dbReference type="FunFam" id="3.20.20.20:FF:000001">
    <property type="entry name" value="4-hydroxy-3-methylbut-2-en-1-yl diphosphate synthase (flavodoxin)"/>
    <property type="match status" value="1"/>
</dbReference>
<dbReference type="FunFam" id="3.30.413.10:FF:000002">
    <property type="entry name" value="4-hydroxy-3-methylbut-2-en-1-yl diphosphate synthase (flavodoxin)"/>
    <property type="match status" value="1"/>
</dbReference>
<dbReference type="Gene3D" id="3.20.20.20">
    <property type="entry name" value="Dihydropteroate synthase-like"/>
    <property type="match status" value="1"/>
</dbReference>
<dbReference type="Gene3D" id="3.30.413.10">
    <property type="entry name" value="Sulfite Reductase Hemoprotein, domain 1"/>
    <property type="match status" value="1"/>
</dbReference>
<dbReference type="HAMAP" id="MF_00159">
    <property type="entry name" value="IspG"/>
    <property type="match status" value="1"/>
</dbReference>
<dbReference type="InterPro" id="IPR011005">
    <property type="entry name" value="Dihydropteroate_synth-like_sf"/>
</dbReference>
<dbReference type="InterPro" id="IPR036849">
    <property type="entry name" value="Enolase-like_C_sf"/>
</dbReference>
<dbReference type="InterPro" id="IPR016425">
    <property type="entry name" value="IspG_bac"/>
</dbReference>
<dbReference type="InterPro" id="IPR004588">
    <property type="entry name" value="IspG_bac-typ"/>
</dbReference>
<dbReference type="InterPro" id="IPR045854">
    <property type="entry name" value="NO2/SO3_Rdtase_4Fe4S_sf"/>
</dbReference>
<dbReference type="NCBIfam" id="TIGR00612">
    <property type="entry name" value="ispG_gcpE"/>
    <property type="match status" value="1"/>
</dbReference>
<dbReference type="NCBIfam" id="NF001540">
    <property type="entry name" value="PRK00366.1"/>
    <property type="match status" value="1"/>
</dbReference>
<dbReference type="PANTHER" id="PTHR30454">
    <property type="entry name" value="4-HYDROXY-3-METHYLBUT-2-EN-1-YL DIPHOSPHATE SYNTHASE"/>
    <property type="match status" value="1"/>
</dbReference>
<dbReference type="PANTHER" id="PTHR30454:SF0">
    <property type="entry name" value="4-HYDROXY-3-METHYLBUT-2-EN-1-YL DIPHOSPHATE SYNTHASE (FERREDOXIN), CHLOROPLASTIC"/>
    <property type="match status" value="1"/>
</dbReference>
<dbReference type="Pfam" id="PF04551">
    <property type="entry name" value="GcpE"/>
    <property type="match status" value="1"/>
</dbReference>
<dbReference type="PIRSF" id="PIRSF004640">
    <property type="entry name" value="IspG"/>
    <property type="match status" value="1"/>
</dbReference>
<dbReference type="SUPFAM" id="SSF51604">
    <property type="entry name" value="Enolase C-terminal domain-like"/>
    <property type="match status" value="1"/>
</dbReference>
<dbReference type="SUPFAM" id="SSF56014">
    <property type="entry name" value="Nitrite and sulphite reductase 4Fe-4S domain-like"/>
    <property type="match status" value="1"/>
</dbReference>
<comment type="function">
    <text evidence="1">Converts 2C-methyl-D-erythritol 2,4-cyclodiphosphate (ME-2,4cPP) into 1-hydroxy-2-methyl-2-(E)-butenyl 4-diphosphate.</text>
</comment>
<comment type="catalytic activity">
    <reaction evidence="1">
        <text>(2E)-4-hydroxy-3-methylbut-2-enyl diphosphate + oxidized [flavodoxin] + H2O + 2 H(+) = 2-C-methyl-D-erythritol 2,4-cyclic diphosphate + reduced [flavodoxin]</text>
        <dbReference type="Rhea" id="RHEA:43604"/>
        <dbReference type="Rhea" id="RHEA-COMP:10622"/>
        <dbReference type="Rhea" id="RHEA-COMP:10623"/>
        <dbReference type="ChEBI" id="CHEBI:15377"/>
        <dbReference type="ChEBI" id="CHEBI:15378"/>
        <dbReference type="ChEBI" id="CHEBI:57618"/>
        <dbReference type="ChEBI" id="CHEBI:58210"/>
        <dbReference type="ChEBI" id="CHEBI:58483"/>
        <dbReference type="ChEBI" id="CHEBI:128753"/>
        <dbReference type="EC" id="1.17.7.3"/>
    </reaction>
</comment>
<comment type="cofactor">
    <cofactor evidence="1">
        <name>[4Fe-4S] cluster</name>
        <dbReference type="ChEBI" id="CHEBI:49883"/>
    </cofactor>
    <text evidence="1">Binds 1 [4Fe-4S] cluster.</text>
</comment>
<comment type="pathway">
    <text evidence="1">Isoprenoid biosynthesis; isopentenyl diphosphate biosynthesis via DXP pathway; isopentenyl diphosphate from 1-deoxy-D-xylulose 5-phosphate: step 5/6.</text>
</comment>
<comment type="similarity">
    <text evidence="1">Belongs to the IspG family.</text>
</comment>
<keyword id="KW-0004">4Fe-4S</keyword>
<keyword id="KW-0408">Iron</keyword>
<keyword id="KW-0411">Iron-sulfur</keyword>
<keyword id="KW-0414">Isoprene biosynthesis</keyword>
<keyword id="KW-0479">Metal-binding</keyword>
<keyword id="KW-0560">Oxidoreductase</keyword>
<gene>
    <name evidence="1" type="primary">ispG</name>
    <name type="ordered locus">YPN_1259</name>
    <name type="ORF">YP516_1382</name>
</gene>
<reference key="1">
    <citation type="journal article" date="2006" name="J. Bacteriol.">
        <title>Complete genome sequence of Yersinia pestis strains Antiqua and Nepal516: evidence of gene reduction in an emerging pathogen.</title>
        <authorList>
            <person name="Chain P.S.G."/>
            <person name="Hu P."/>
            <person name="Malfatti S.A."/>
            <person name="Radnedge L."/>
            <person name="Larimer F."/>
            <person name="Vergez L.M."/>
            <person name="Worsham P."/>
            <person name="Chu M.C."/>
            <person name="Andersen G.L."/>
        </authorList>
    </citation>
    <scope>NUCLEOTIDE SEQUENCE [LARGE SCALE GENOMIC DNA]</scope>
    <source>
        <strain>Nepal516</strain>
    </source>
</reference>
<reference key="2">
    <citation type="submission" date="2009-04" db="EMBL/GenBank/DDBJ databases">
        <title>Yersinia pestis Nepal516A whole genome shotgun sequencing project.</title>
        <authorList>
            <person name="Plunkett G. III"/>
            <person name="Anderson B.D."/>
            <person name="Baumler D.J."/>
            <person name="Burland V."/>
            <person name="Cabot E.L."/>
            <person name="Glasner J.D."/>
            <person name="Mau B."/>
            <person name="Neeno-Eckwall E."/>
            <person name="Perna N.T."/>
            <person name="Munk A.C."/>
            <person name="Tapia R."/>
            <person name="Green L.D."/>
            <person name="Rogers Y.C."/>
            <person name="Detter J.C."/>
            <person name="Bruce D.C."/>
            <person name="Brettin T.S."/>
        </authorList>
    </citation>
    <scope>NUCLEOTIDE SEQUENCE [LARGE SCALE GENOMIC DNA]</scope>
    <source>
        <strain>Nepal516</strain>
    </source>
</reference>
<evidence type="ECO:0000255" key="1">
    <source>
        <dbReference type="HAMAP-Rule" id="MF_00159"/>
    </source>
</evidence>
<organism>
    <name type="scientific">Yersinia pestis bv. Antiqua (strain Nepal516)</name>
    <dbReference type="NCBI Taxonomy" id="377628"/>
    <lineage>
        <taxon>Bacteria</taxon>
        <taxon>Pseudomonadati</taxon>
        <taxon>Pseudomonadota</taxon>
        <taxon>Gammaproteobacteria</taxon>
        <taxon>Enterobacterales</taxon>
        <taxon>Yersiniaceae</taxon>
        <taxon>Yersinia</taxon>
    </lineage>
</organism>
<proteinExistence type="inferred from homology"/>
<accession>Q1CK91</accession>
<accession>C4GRL1</accession>
<sequence>MHNGSPIIRRKSTRIYVGKVPIGDGAPIAVQSMTNTKTTDVDATVAQIKALERVGVDIVRVSIPTMDAAEAFKLIKQQSTVPLVADIHFDYRIALKVAEYGVDCLRINPGNIGNESRIREVVACARDYNIPIRIGINGGSLEKDIQEKYGEPTPEALLESAMRHVDILDRLNFDQFKVSVKASDVFLAVNSYRLLAKQINNPLHLGITEAGGARSGSVKSAIGLGLLLSEGIGDTLRISLAADPVEEVKVGFDILKSLRIRARGINFIACPTCSRQEFDVIGTVNALEQRLEDLITPMDVSIIGCVVNGPGEALVSTIGVTGARNHSGFYEDGVRQKERFDNKAMIDQLEAKIRAKASILDANNRIVINQLDDNK</sequence>
<protein>
    <recommendedName>
        <fullName evidence="1">4-hydroxy-3-methylbut-2-en-1-yl diphosphate synthase (flavodoxin)</fullName>
        <ecNumber evidence="1">1.17.7.3</ecNumber>
    </recommendedName>
    <alternativeName>
        <fullName evidence="1">1-hydroxy-2-methyl-2-(E)-butenyl 4-diphosphate synthase</fullName>
    </alternativeName>
</protein>
<name>ISPG_YERPN</name>